<gene>
    <name type="ordered locus">Os01g0157700</name>
    <name type="ordered locus">LOC_Os01g06450</name>
    <name type="ORF">P0011G08.41</name>
</gene>
<reference key="1">
    <citation type="journal article" date="2002" name="Nature">
        <title>The genome sequence and structure of rice chromosome 1.</title>
        <authorList>
            <person name="Sasaki T."/>
            <person name="Matsumoto T."/>
            <person name="Yamamoto K."/>
            <person name="Sakata K."/>
            <person name="Baba T."/>
            <person name="Katayose Y."/>
            <person name="Wu J."/>
            <person name="Niimura Y."/>
            <person name="Cheng Z."/>
            <person name="Nagamura Y."/>
            <person name="Antonio B.A."/>
            <person name="Kanamori H."/>
            <person name="Hosokawa S."/>
            <person name="Masukawa M."/>
            <person name="Arikawa K."/>
            <person name="Chiden Y."/>
            <person name="Hayashi M."/>
            <person name="Okamoto M."/>
            <person name="Ando T."/>
            <person name="Aoki H."/>
            <person name="Arita K."/>
            <person name="Hamada M."/>
            <person name="Harada C."/>
            <person name="Hijishita S."/>
            <person name="Honda M."/>
            <person name="Ichikawa Y."/>
            <person name="Idonuma A."/>
            <person name="Iijima M."/>
            <person name="Ikeda M."/>
            <person name="Ikeno M."/>
            <person name="Ito S."/>
            <person name="Ito T."/>
            <person name="Ito Y."/>
            <person name="Ito Y."/>
            <person name="Iwabuchi A."/>
            <person name="Kamiya K."/>
            <person name="Karasawa W."/>
            <person name="Katagiri S."/>
            <person name="Kikuta A."/>
            <person name="Kobayashi N."/>
            <person name="Kono I."/>
            <person name="Machita K."/>
            <person name="Maehara T."/>
            <person name="Mizuno H."/>
            <person name="Mizubayashi T."/>
            <person name="Mukai Y."/>
            <person name="Nagasaki H."/>
            <person name="Nakashima M."/>
            <person name="Nakama Y."/>
            <person name="Nakamichi Y."/>
            <person name="Nakamura M."/>
            <person name="Namiki N."/>
            <person name="Negishi M."/>
            <person name="Ohta I."/>
            <person name="Ono N."/>
            <person name="Saji S."/>
            <person name="Sakai K."/>
            <person name="Shibata M."/>
            <person name="Shimokawa T."/>
            <person name="Shomura A."/>
            <person name="Song J."/>
            <person name="Takazaki Y."/>
            <person name="Terasawa K."/>
            <person name="Tsuji K."/>
            <person name="Waki K."/>
            <person name="Yamagata H."/>
            <person name="Yamane H."/>
            <person name="Yoshiki S."/>
            <person name="Yoshihara R."/>
            <person name="Yukawa K."/>
            <person name="Zhong H."/>
            <person name="Iwama H."/>
            <person name="Endo T."/>
            <person name="Ito H."/>
            <person name="Hahn J.H."/>
            <person name="Kim H.-I."/>
            <person name="Eun M.-Y."/>
            <person name="Yano M."/>
            <person name="Jiang J."/>
            <person name="Gojobori T."/>
        </authorList>
    </citation>
    <scope>NUCLEOTIDE SEQUENCE [LARGE SCALE GENOMIC DNA]</scope>
    <source>
        <strain>cv. Nipponbare</strain>
    </source>
</reference>
<reference key="2">
    <citation type="journal article" date="2005" name="Nature">
        <title>The map-based sequence of the rice genome.</title>
        <authorList>
            <consortium name="International rice genome sequencing project (IRGSP)"/>
        </authorList>
    </citation>
    <scope>NUCLEOTIDE SEQUENCE [LARGE SCALE GENOMIC DNA]</scope>
    <source>
        <strain>cv. Nipponbare</strain>
    </source>
</reference>
<reference key="3">
    <citation type="journal article" date="2013" name="Rice">
        <title>Improvement of the Oryza sativa Nipponbare reference genome using next generation sequence and optical map data.</title>
        <authorList>
            <person name="Kawahara Y."/>
            <person name="de la Bastide M."/>
            <person name="Hamilton J.P."/>
            <person name="Kanamori H."/>
            <person name="McCombie W.R."/>
            <person name="Ouyang S."/>
            <person name="Schwartz D.C."/>
            <person name="Tanaka T."/>
            <person name="Wu J."/>
            <person name="Zhou S."/>
            <person name="Childs K.L."/>
            <person name="Davidson R.M."/>
            <person name="Lin H."/>
            <person name="Quesada-Ocampo L."/>
            <person name="Vaillancourt B."/>
            <person name="Sakai H."/>
            <person name="Lee S.S."/>
            <person name="Kim J."/>
            <person name="Numa H."/>
            <person name="Itoh T."/>
            <person name="Buell C.R."/>
            <person name="Matsumoto T."/>
        </authorList>
    </citation>
    <scope>GENOME REANNOTATION</scope>
    <source>
        <strain>cv. Nipponbare</strain>
    </source>
</reference>
<feature type="chain" id="PRO_0000407553" description="Probable glucuronosyltransferase Os01g0157700">
    <location>
        <begin position="1"/>
        <end position="549"/>
    </location>
</feature>
<feature type="topological domain" description="Cytoplasmic" evidence="2">
    <location>
        <begin position="1"/>
        <end position="16"/>
    </location>
</feature>
<feature type="transmembrane region" description="Helical; Signal-anchor for type II membrane protein" evidence="2">
    <location>
        <begin position="17"/>
        <end position="37"/>
    </location>
</feature>
<feature type="topological domain" description="Lumenal" evidence="2">
    <location>
        <begin position="38"/>
        <end position="549"/>
    </location>
</feature>
<feature type="region of interest" description="Disordered" evidence="3">
    <location>
        <begin position="232"/>
        <end position="252"/>
    </location>
</feature>
<feature type="region of interest" description="Disordered" evidence="3">
    <location>
        <begin position="350"/>
        <end position="371"/>
    </location>
</feature>
<feature type="region of interest" description="Disordered" evidence="3">
    <location>
        <begin position="413"/>
        <end position="432"/>
    </location>
</feature>
<feature type="region of interest" description="Disordered" evidence="3">
    <location>
        <begin position="441"/>
        <end position="524"/>
    </location>
</feature>
<feature type="compositionally biased region" description="Basic and acidic residues" evidence="3">
    <location>
        <begin position="350"/>
        <end position="363"/>
    </location>
</feature>
<feature type="compositionally biased region" description="Basic and acidic residues" evidence="3">
    <location>
        <begin position="441"/>
        <end position="465"/>
    </location>
</feature>
<feature type="compositionally biased region" description="Basic and acidic residues" evidence="3">
    <location>
        <begin position="472"/>
        <end position="496"/>
    </location>
</feature>
<feature type="compositionally biased region" description="Basic and acidic residues" evidence="3">
    <location>
        <begin position="503"/>
        <end position="524"/>
    </location>
</feature>
<feature type="glycosylation site" description="N-linked (GlcNAc...) asparagine" evidence="2">
    <location>
        <position position="112"/>
    </location>
</feature>
<feature type="glycosylation site" description="N-linked (GlcNAc...) asparagine" evidence="2">
    <location>
        <position position="139"/>
    </location>
</feature>
<feature type="glycosylation site" description="N-linked (GlcNAc...) asparagine" evidence="2">
    <location>
        <position position="214"/>
    </location>
</feature>
<feature type="glycosylation site" description="N-linked (GlcNAc...) asparagine" evidence="2">
    <location>
        <position position="229"/>
    </location>
</feature>
<feature type="glycosylation site" description="N-linked (GlcNAc...) asparagine" evidence="2">
    <location>
        <position position="240"/>
    </location>
</feature>
<feature type="glycosylation site" description="N-linked (GlcNAc...) asparagine" evidence="2">
    <location>
        <position position="251"/>
    </location>
</feature>
<feature type="glycosylation site" description="N-linked (GlcNAc...) asparagine" evidence="2">
    <location>
        <position position="264"/>
    </location>
</feature>
<feature type="glycosylation site" description="N-linked (GlcNAc...) asparagine" evidence="2">
    <location>
        <position position="269"/>
    </location>
</feature>
<feature type="glycosylation site" description="N-linked (GlcNAc...) asparagine" evidence="2">
    <location>
        <position position="300"/>
    </location>
</feature>
<feature type="glycosylation site" description="N-linked (GlcNAc...) asparagine" evidence="2">
    <location>
        <position position="421"/>
    </location>
</feature>
<feature type="glycosylation site" description="N-linked (GlcNAc...) asparagine" evidence="2">
    <location>
        <position position="452"/>
    </location>
</feature>
<accession>Q5ZCC5</accession>
<accession>Q9FYQ1</accession>
<comment type="function">
    <text evidence="1">Involved in the synthesis of glucuronoxylan hemicellulose in secondary cell walls.</text>
</comment>
<comment type="subcellular location">
    <subcellularLocation>
        <location evidence="1">Golgi apparatus membrane</location>
        <topology evidence="1">Single-pass type II membrane protein</topology>
    </subcellularLocation>
</comment>
<comment type="similarity">
    <text evidence="4">Belongs to the glycosyltransferase 43 family.</text>
</comment>
<comment type="sequence caution" evidence="4">
    <conflict type="erroneous gene model prediction">
        <sequence resource="EMBL-CDS" id="BAB08184"/>
    </conflict>
</comment>
<keyword id="KW-0961">Cell wall biogenesis/degradation</keyword>
<keyword id="KW-0325">Glycoprotein</keyword>
<keyword id="KW-0328">Glycosyltransferase</keyword>
<keyword id="KW-0333">Golgi apparatus</keyword>
<keyword id="KW-0472">Membrane</keyword>
<keyword id="KW-1185">Reference proteome</keyword>
<keyword id="KW-0735">Signal-anchor</keyword>
<keyword id="KW-0808">Transferase</keyword>
<keyword id="KW-0812">Transmembrane</keyword>
<keyword id="KW-1133">Transmembrane helix</keyword>
<organism>
    <name type="scientific">Oryza sativa subsp. japonica</name>
    <name type="common">Rice</name>
    <dbReference type="NCBI Taxonomy" id="39947"/>
    <lineage>
        <taxon>Eukaryota</taxon>
        <taxon>Viridiplantae</taxon>
        <taxon>Streptophyta</taxon>
        <taxon>Embryophyta</taxon>
        <taxon>Tracheophyta</taxon>
        <taxon>Spermatophyta</taxon>
        <taxon>Magnoliopsida</taxon>
        <taxon>Liliopsida</taxon>
        <taxon>Poales</taxon>
        <taxon>Poaceae</taxon>
        <taxon>BOP clade</taxon>
        <taxon>Oryzoideae</taxon>
        <taxon>Oryzeae</taxon>
        <taxon>Oryzinae</taxon>
        <taxon>Oryza</taxon>
        <taxon>Oryza sativa</taxon>
    </lineage>
</organism>
<dbReference type="EC" id="2.4.-.-"/>
<dbReference type="EMBL" id="AP002539">
    <property type="protein sequence ID" value="BAB08184.1"/>
    <property type="status" value="ALT_SEQ"/>
    <property type="molecule type" value="Genomic_DNA"/>
</dbReference>
<dbReference type="EMBL" id="AP003225">
    <property type="protein sequence ID" value="BAD61436.1"/>
    <property type="molecule type" value="Genomic_DNA"/>
</dbReference>
<dbReference type="EMBL" id="AP014957">
    <property type="status" value="NOT_ANNOTATED_CDS"/>
    <property type="molecule type" value="Genomic_DNA"/>
</dbReference>
<dbReference type="SMR" id="Q5ZCC5"/>
<dbReference type="FunCoup" id="Q5ZCC5">
    <property type="interactions" value="439"/>
</dbReference>
<dbReference type="STRING" id="39947.Q5ZCC5"/>
<dbReference type="CAZy" id="GT43">
    <property type="family name" value="Glycosyltransferase Family 43"/>
</dbReference>
<dbReference type="PaxDb" id="39947-Q5ZCC5"/>
<dbReference type="eggNOG" id="KOG1476">
    <property type="taxonomic scope" value="Eukaryota"/>
</dbReference>
<dbReference type="InParanoid" id="Q5ZCC5"/>
<dbReference type="Proteomes" id="UP000000763">
    <property type="component" value="Chromosome 1"/>
</dbReference>
<dbReference type="Proteomes" id="UP000059680">
    <property type="component" value="Chromosome 1"/>
</dbReference>
<dbReference type="GO" id="GO:0000139">
    <property type="term" value="C:Golgi membrane"/>
    <property type="evidence" value="ECO:0000318"/>
    <property type="project" value="GO_Central"/>
</dbReference>
<dbReference type="GO" id="GO:0015018">
    <property type="term" value="F:galactosylgalactosylxylosylprotein 3-beta-glucuronosyltransferase activity"/>
    <property type="evidence" value="ECO:0007669"/>
    <property type="project" value="InterPro"/>
</dbReference>
<dbReference type="GO" id="GO:0042285">
    <property type="term" value="F:xylosyltransferase activity"/>
    <property type="evidence" value="ECO:0000318"/>
    <property type="project" value="GO_Central"/>
</dbReference>
<dbReference type="GO" id="GO:0071555">
    <property type="term" value="P:cell wall organization"/>
    <property type="evidence" value="ECO:0007669"/>
    <property type="project" value="UniProtKB-KW"/>
</dbReference>
<dbReference type="GO" id="GO:0010417">
    <property type="term" value="P:glucuronoxylan biosynthetic process"/>
    <property type="evidence" value="ECO:0000318"/>
    <property type="project" value="GO_Central"/>
</dbReference>
<dbReference type="GO" id="GO:0009834">
    <property type="term" value="P:plant-type secondary cell wall biogenesis"/>
    <property type="evidence" value="ECO:0000318"/>
    <property type="project" value="GO_Central"/>
</dbReference>
<dbReference type="Gene3D" id="3.90.550.10">
    <property type="entry name" value="Spore Coat Polysaccharide Biosynthesis Protein SpsA, Chain A"/>
    <property type="match status" value="1"/>
</dbReference>
<dbReference type="InterPro" id="IPR005027">
    <property type="entry name" value="Glyco_trans_43"/>
</dbReference>
<dbReference type="InterPro" id="IPR029044">
    <property type="entry name" value="Nucleotide-diphossugar_trans"/>
</dbReference>
<dbReference type="PANTHER" id="PTHR10896">
    <property type="entry name" value="GALACTOSYLGALACTOSYLXYLOSYLPROTEIN 3-BETA-GLUCURONOSYLTRANSFERASE BETA-1,3-GLUCURONYLTRANSFERASE"/>
    <property type="match status" value="1"/>
</dbReference>
<dbReference type="PANTHER" id="PTHR10896:SF32">
    <property type="entry name" value="GLUCURONOSYLTRANSFERASE OS01G0157700-RELATED"/>
    <property type="match status" value="1"/>
</dbReference>
<dbReference type="Pfam" id="PF03360">
    <property type="entry name" value="Glyco_transf_43"/>
    <property type="match status" value="1"/>
</dbReference>
<dbReference type="SUPFAM" id="SSF53448">
    <property type="entry name" value="Nucleotide-diphospho-sugar transferases"/>
    <property type="match status" value="1"/>
</dbReference>
<name>GT11_ORYSJ</name>
<proteinExistence type="inferred from homology"/>
<evidence type="ECO:0000250" key="1"/>
<evidence type="ECO:0000255" key="2"/>
<evidence type="ECO:0000256" key="3">
    <source>
        <dbReference type="SAM" id="MobiDB-lite"/>
    </source>
</evidence>
<evidence type="ECO:0000305" key="4"/>
<protein>
    <recommendedName>
        <fullName>Probable glucuronosyltransferase Os01g0157700</fullName>
        <ecNumber>2.4.-.-</ecNumber>
    </recommendedName>
</protein>
<sequence>MDSEERSKKRLRLWSRAVVHFSLCFAIGVFAALLPLAATGATSIDSIRASFRPTVAATPPVPELDLLLIVTVTRPDDDDDDGMSQEASLTRLGHTLRLVEPPLLWIVVGAENTTATARAVNALRGTRVMFRHLTYAAENFTGPAGDEVDYQMNVALSHIQLHRLPGVVHFAAASSVYDLRFFQQLRQTRGIAAWPIATVSSADQTVKLEGPTCNSSQITGWYSKDSSSNITETTWDSSSNTTQTTWDSSSNKTQTTTLAALDTNASKQNSSSGPPEINMHAVGFKSSMLWDSERFTRRDNSSTGINQDLIQAVRQMMINDEDKKRGIPSDCSDSQIMLWHLDMPRHTPKIEQATPEKESLTKGDEEESHDMTLDNVVPKTEEHETLEKENLMKGDEKGSHDMMLDNVVAKIEEQETPEKENLTKGEEKESHDMMLDNVVAKIEEQETPEKENLTKGDEKESHDMMLDNVVAKIDEQETTEKESLTKGDEKESHDMMLDNVVAKIEEQETPEKESLTKGDEKETHDMMLDNVVAKIEEQETPEEGKTKEG</sequence>